<reference key="1">
    <citation type="journal article" date="1989" name="Gene">
        <title>Characterization, overproduction and purification of the product of gene 1 of Bacillus subtilis phage phi 29.</title>
        <authorList>
            <person name="Prieto I."/>
            <person name="Mendez E."/>
            <person name="Salas M."/>
        </authorList>
    </citation>
    <scope>NUCLEOTIDE SEQUENCE [GENOMIC DNA] (ISOFORMS LONG AND SHORT)</scope>
    <scope>PROTEIN SEQUENCE OF 2-9 AND 35-41</scope>
</reference>
<reference key="2">
    <citation type="journal article" date="1982" name="Gene">
        <title>Nucleotide sequence of the major early region of bacteriophage phi 29.</title>
        <authorList>
            <person name="Yoshikawa H."/>
            <person name="Ito J."/>
        </authorList>
    </citation>
    <scope>NUCLEOTIDE SEQUENCE [GENOMIC DNA] (ISOFORMS LONG AND SHORT)</scope>
</reference>
<reference key="3">
    <citation type="submission" date="2008-05" db="EMBL/GenBank/DDBJ databases">
        <authorList>
            <person name="Villegas A.P."/>
            <person name="Lingohr E.J."/>
            <person name="Ceyssens P.-J."/>
            <person name="Kropinski A.M."/>
        </authorList>
    </citation>
    <scope>NUCLEOTIDE SEQUENCE [GENOMIC DNA] (ISOFORM LONG)</scope>
</reference>
<reference key="4">
    <citation type="journal article" date="1997" name="J. Mol. Biol.">
        <title>Initiation of bacteriophage phi29 DNA replication in vivo: assembly of a membrane-associated multiprotein complex.</title>
        <authorList>
            <person name="Bravo A."/>
            <person name="Salas M."/>
        </authorList>
    </citation>
    <scope>FUNCTION</scope>
</reference>
<reference key="5">
    <citation type="journal article" date="1998" name="EMBO J.">
        <title>Polymerization of bacteriophage phi 29 replication protein p1 into protofilament sheets.</title>
        <authorList>
            <person name="Bravo A."/>
            <person name="Salas M."/>
        </authorList>
    </citation>
    <scope>FUNCTION</scope>
    <scope>SUBUNIT</scope>
</reference>
<reference key="6">
    <citation type="journal article" date="1998" name="Biochem. Biophys. Res. Commun.">
        <title>Gene 1, one of the dna genes of bacteriophage phi 29, represses other dna genes through binding to mRNA.</title>
        <authorList>
            <person name="Takeuchi A."/>
            <person name="Makino O."/>
            <person name="Hirokawa H."/>
        </authorList>
    </citation>
    <scope>RNA-BINDING</scope>
</reference>
<reference key="7">
    <citation type="journal article" date="2000" name="EMBO J.">
        <title>Compartmentalization of phage phi29 DNA replication: interaction between the primer terminal protein and the membrane-associated protein p1.</title>
        <authorList>
            <person name="Bravo A."/>
            <person name="Illana B."/>
            <person name="Salas M."/>
        </authorList>
    </citation>
    <scope>DOMAIN</scope>
    <scope>SUBCELLULAR LOCATION</scope>
    <scope>INTERACTION WITH THE PRIMER TERMINAL PROTEIN</scope>
    <scope>FUNCTION</scope>
</reference>
<reference key="8">
    <citation type="journal article" date="2001" name="J. Biol. Chem.">
        <title>A single amino acid substitution within a coiled-coil motif changes the assembly of a 53-amino acid protein from two-dimensional sheets to filamentous structures.</title>
        <authorList>
            <person name="Bravo A."/>
            <person name="Serrano-Heras G."/>
            <person name="Salas M."/>
        </authorList>
    </citation>
    <scope>COILED COIL</scope>
    <scope>MUTAGENESIS OF LEU-40; LEU-47; MET-54 AND LEU-61</scope>
</reference>
<reference key="9">
    <citation type="journal article" date="2003" name="J. Biol. Chem.">
        <title>In vivo assembly of phage phi 29 replication protein p1 into membrane-associated multimeric structures.</title>
        <authorList>
            <person name="Serrano-Heras G."/>
            <person name="Salas M."/>
            <person name="Bravo A."/>
        </authorList>
    </citation>
    <scope>SUBCELLULAR LOCATION</scope>
    <scope>FUNCTION</scope>
</reference>
<reference key="10">
    <citation type="journal article" date="2005" name="Biochem. Biophys. Res. Commun.">
        <title>Effects of single amino acid substitutions at the predicted coiled-coil or hydrophobic region on the self-assembly of phi29 replication protein, gp1.</title>
        <authorList>
            <person name="Hashiyama K."/>
            <person name="Takeuchi A."/>
            <person name="Makino O."/>
        </authorList>
    </citation>
    <scope>RNA-BINDING</scope>
    <scope>SUBUNIT</scope>
    <scope>MUTAGENESIS OF LYS-3; LYS-9; LYS-34; LYS-42; TRP-72; LYS-75 AND PHE-78</scope>
</reference>
<reference key="11">
    <citation type="journal article" date="2013" name="Proc. Natl. Acad. Sci. U.S.A.">
        <title>Phage 29 phi protein p1 promotes replication by associating with the FtsZ ring of the divisome in Bacillus subtilis.</title>
        <authorList>
            <person name="Ballesteros-Plaza D."/>
            <person name="Holguera I."/>
            <person name="Scheffers D.J."/>
            <person name="Salas M."/>
            <person name="Munoz-Espin D."/>
        </authorList>
    </citation>
    <scope>INTERACTION WITH BACILLUS SUBTILIS FTSZ</scope>
</reference>
<name>GP1_BPPH2</name>
<protein>
    <recommendedName>
        <fullName evidence="10">DNA replication protein 1</fullName>
    </recommendedName>
    <alternativeName>
        <fullName evidence="11">Gene product 1</fullName>
        <shortName evidence="11">gp1</shortName>
    </alternativeName>
</protein>
<dbReference type="EMBL" id="M26968">
    <property type="protein sequence ID" value="AAB59294.1"/>
    <property type="molecule type" value="Genomic_DNA"/>
</dbReference>
<dbReference type="EMBL" id="M26968">
    <property type="protein sequence ID" value="AAB59295.1"/>
    <property type="molecule type" value="Genomic_DNA"/>
</dbReference>
<dbReference type="EMBL" id="V01155">
    <property type="protein sequence ID" value="CAA24478.1"/>
    <property type="molecule type" value="Genomic_DNA"/>
</dbReference>
<dbReference type="EMBL" id="V01155">
    <property type="protein sequence ID" value="CAA24479.1"/>
    <property type="molecule type" value="Genomic_DNA"/>
</dbReference>
<dbReference type="EMBL" id="EU771092">
    <property type="protein sequence ID" value="ACE96022.1"/>
    <property type="molecule type" value="Genomic_DNA"/>
</dbReference>
<dbReference type="PIR" id="A04281">
    <property type="entry name" value="ERBP19"/>
</dbReference>
<dbReference type="RefSeq" id="YP_002004528.1">
    <molecule id="P03679-1"/>
    <property type="nucleotide sequence ID" value="NC_011048.1"/>
</dbReference>
<dbReference type="SMR" id="P03679"/>
<dbReference type="GeneID" id="6446501"/>
<dbReference type="KEGG" id="vg:6446501"/>
<dbReference type="Proteomes" id="UP000001207">
    <property type="component" value="Genome"/>
</dbReference>
<dbReference type="GO" id="GO:0033644">
    <property type="term" value="C:host cell membrane"/>
    <property type="evidence" value="ECO:0000314"/>
    <property type="project" value="UniProtKB"/>
</dbReference>
<dbReference type="GO" id="GO:0016020">
    <property type="term" value="C:membrane"/>
    <property type="evidence" value="ECO:0007669"/>
    <property type="project" value="UniProtKB-KW"/>
</dbReference>
<dbReference type="GO" id="GO:0003723">
    <property type="term" value="F:RNA binding"/>
    <property type="evidence" value="ECO:0007669"/>
    <property type="project" value="UniProtKB-KW"/>
</dbReference>
<dbReference type="GO" id="GO:0006260">
    <property type="term" value="P:DNA replication"/>
    <property type="evidence" value="ECO:0007669"/>
    <property type="project" value="UniProtKB-KW"/>
</dbReference>
<dbReference type="GO" id="GO:0039693">
    <property type="term" value="P:viral DNA genome replication"/>
    <property type="evidence" value="ECO:0000314"/>
    <property type="project" value="UniProtKB"/>
</dbReference>
<dbReference type="InterPro" id="IPR016408">
    <property type="entry name" value="Phage_phi-29_Gp1"/>
</dbReference>
<dbReference type="PIRSF" id="PIRSF004177">
    <property type="entry name" value="gp1_phi29"/>
    <property type="match status" value="1"/>
</dbReference>
<organismHost>
    <name type="scientific">Bacillus subtilis</name>
    <dbReference type="NCBI Taxonomy" id="1423"/>
</organismHost>
<accession>P03679</accession>
<accession>Q6LDQ0</accession>
<accession>Q6LDQ1</accession>
<feature type="initiator methionine" description="Removed" evidence="7">
    <location>
        <position position="1"/>
    </location>
</feature>
<feature type="chain" id="PRO_0000003359" description="DNA replication protein 1">
    <location>
        <begin position="2"/>
        <end position="86"/>
    </location>
</feature>
<feature type="coiled-coil region" evidence="1">
    <location>
        <begin position="38"/>
        <end position="67"/>
    </location>
</feature>
<feature type="splice variant" id="VSP_018684" description="In isoform Short." evidence="11">
    <location>
        <begin position="1"/>
        <end position="34"/>
    </location>
</feature>
<feature type="mutagenesis site" description="No effect on self-assembly." evidence="5">
    <original>K</original>
    <variation>E</variation>
    <location>
        <position position="3"/>
    </location>
</feature>
<feature type="mutagenesis site" description="No effect on self-assembly." evidence="5">
    <original>K</original>
    <variation>E</variation>
    <location>
        <position position="9"/>
    </location>
</feature>
<feature type="mutagenesis site" description="Unable to form multimers larger than tetramers." evidence="5">
    <original>K</original>
    <variation>E</variation>
    <location>
        <position position="34"/>
    </location>
</feature>
<feature type="mutagenesis site" description="Assembles as protofilament sheets like the wild type." evidence="3">
    <original>L</original>
    <variation>A</variation>
    <location>
        <position position="40"/>
    </location>
</feature>
<feature type="mutagenesis site" description="Unable to form multimers larger than tetramers." evidence="5">
    <original>K</original>
    <variation>E</variation>
    <location>
        <position position="42"/>
    </location>
</feature>
<feature type="mutagenesis site" description="Assembles as 10-nm filamentous structures." evidence="3">
    <original>L</original>
    <variation>V</variation>
    <location>
        <position position="47"/>
    </location>
</feature>
<feature type="mutagenesis site" description="Cannot assemble as highly ordered structures." evidence="3">
    <original>M</original>
    <variation>A</variation>
    <location>
        <position position="54"/>
    </location>
</feature>
<feature type="mutagenesis site" description="Assembles as small oligomeric structures which cannot assemble further into larger arrays." evidence="3">
    <original>L</original>
    <variation>I</variation>
    <location>
        <position position="61"/>
    </location>
</feature>
<feature type="mutagenesis site" description="Unable to form multimers larger than tetramers." evidence="5">
    <original>W</original>
    <variation>R</variation>
    <location>
        <position position="72"/>
    </location>
</feature>
<feature type="mutagenesis site" description="Unable to form multimers larger than tetramers." evidence="5">
    <original>K</original>
    <variation>E</variation>
    <location>
        <position position="75"/>
    </location>
</feature>
<feature type="mutagenesis site" description="Unable to form multimers larger than tetramers." evidence="5">
    <original>F</original>
    <variation>S</variation>
    <location>
        <position position="78"/>
    </location>
</feature>
<sequence>MGKIFDQEKRLEGTWKNSKWGNQGIIAPVDGDLKMIDLELEKKMTKLEHENKLMKNALYELSRMENNDYATWVIKVLFGGAPHGAK</sequence>
<gene>
    <name type="primary">1</name>
</gene>
<evidence type="ECO:0000255" key="1"/>
<evidence type="ECO:0000269" key="2">
    <source>
    </source>
</evidence>
<evidence type="ECO:0000269" key="3">
    <source>
    </source>
</evidence>
<evidence type="ECO:0000269" key="4">
    <source>
    </source>
</evidence>
<evidence type="ECO:0000269" key="5">
    <source>
    </source>
</evidence>
<evidence type="ECO:0000269" key="6">
    <source>
    </source>
</evidence>
<evidence type="ECO:0000269" key="7">
    <source>
    </source>
</evidence>
<evidence type="ECO:0000269" key="8">
    <source>
    </source>
</evidence>
<evidence type="ECO:0000269" key="9">
    <source>
    </source>
</evidence>
<evidence type="ECO:0000303" key="10">
    <source>
    </source>
</evidence>
<evidence type="ECO:0000305" key="11"/>
<organism>
    <name type="scientific">Bacillus phage phi29</name>
    <name type="common">Bacteriophage phi-29</name>
    <dbReference type="NCBI Taxonomy" id="2884424"/>
    <lineage>
        <taxon>Viruses</taxon>
        <taxon>Duplodnaviria</taxon>
        <taxon>Heunggongvirae</taxon>
        <taxon>Uroviricota</taxon>
        <taxon>Caudoviricetes</taxon>
        <taxon>Salasmaviridae</taxon>
        <taxon>Picovirinae</taxon>
        <taxon>Salasvirus</taxon>
        <taxon>Salasvirus phi29</taxon>
    </lineage>
</organism>
<proteinExistence type="evidence at protein level"/>
<keyword id="KW-0024">Alternative initiation</keyword>
<keyword id="KW-0175">Coiled coil</keyword>
<keyword id="KW-0903">Direct protein sequencing</keyword>
<keyword id="KW-0235">DNA replication</keyword>
<keyword id="KW-0244">Early protein</keyword>
<keyword id="KW-1043">Host membrane</keyword>
<keyword id="KW-0472">Membrane</keyword>
<keyword id="KW-1185">Reference proteome</keyword>
<keyword id="KW-0694">RNA-binding</keyword>
<keyword id="KW-1194">Viral DNA replication</keyword>
<comment type="function">
    <text evidence="2 4 8 9">Protein that assembles into highly ordered structures and provides a specific site for viral DNA replication. Probably anchors the viral DNA replisome to the host membrane.</text>
</comment>
<comment type="subunit">
    <text evidence="5 6 7 9">Homomultimer. Self-associates into large complexes forming long filamentous structures (PubMed:15883018, PubMed:2526779, PubMed:9774353). Interacts (via N-terminus) with the primer terminal protein (PubMed:11032825). Interacts with host FtsZ protein (PubMed:23836667).</text>
</comment>
<comment type="subcellular location">
    <subcellularLocation>
        <location evidence="2 4">Host membrane</location>
        <topology evidence="4">Peripheral membrane protein</topology>
    </subcellularLocation>
</comment>
<comment type="alternative products">
    <event type="alternative initiation"/>
    <isoform>
        <id>P03679-1</id>
        <name>Long</name>
        <name>10 kDa</name>
        <sequence type="displayed"/>
    </isoform>
    <isoform>
        <id>P03679-2</id>
        <name>Short</name>
        <name>6 kDa</name>
        <name>Protein delta-1</name>
        <sequence type="described" ref="VSP_018684"/>
    </isoform>
</comment>
<comment type="domain">
    <text evidence="2 3">The hydrophobic C-terminus is involved in the association with the host membrane (PubMed:11032825). The coiled coil region is involved assembly into protofilament sheet structures (PubMed:11283004).</text>
</comment>
<comment type="similarity">
    <text evidence="11">Belongs to the phi29likevirus DNA replication protein 1 family.</text>
</comment>